<name>PVK2_PERRU</name>
<reference evidence="4" key="1">
    <citation type="journal article" date="2009" name="BMC Evol. Biol.">
        <title>A proteomic approach for studying insect phylogeny: CAPA peptides of ancient insect taxa (Dictyoptera, Blattoptera) as a test case.</title>
        <authorList>
            <person name="Roth S."/>
            <person name="Fromm B."/>
            <person name="Gaede G."/>
            <person name="Predel R."/>
        </authorList>
    </citation>
    <scope>PROTEIN SEQUENCE</scope>
    <scope>AMIDATION AT VAL-11</scope>
    <source>
        <tissue evidence="2">Abdominal perisympathetic organs</tissue>
    </source>
</reference>
<comment type="function">
    <text evidence="4">Mediates visceral muscle contractile activity (myotropic activity).</text>
</comment>
<comment type="subcellular location">
    <subcellularLocation>
        <location evidence="4">Secreted</location>
    </subcellularLocation>
</comment>
<comment type="similarity">
    <text evidence="1">Belongs to the periviscerokinin family.</text>
</comment>
<organism>
    <name type="scientific">Perisphaeria ruficornis</name>
    <name type="common">Cockroach</name>
    <dbReference type="NCBI Taxonomy" id="521516"/>
    <lineage>
        <taxon>Eukaryota</taxon>
        <taxon>Metazoa</taxon>
        <taxon>Ecdysozoa</taxon>
        <taxon>Arthropoda</taxon>
        <taxon>Hexapoda</taxon>
        <taxon>Insecta</taxon>
        <taxon>Pterygota</taxon>
        <taxon>Neoptera</taxon>
        <taxon>Polyneoptera</taxon>
        <taxon>Dictyoptera</taxon>
        <taxon>Blattodea</taxon>
        <taxon>Blaberoidea</taxon>
        <taxon>Blaberidae</taxon>
        <taxon>Perisphaerinae</taxon>
        <taxon>Perisphaeria</taxon>
    </lineage>
</organism>
<protein>
    <recommendedName>
        <fullName evidence="3">Periviscerokinin-2</fullName>
        <shortName evidence="3">PerRu-PVK-2</shortName>
    </recommendedName>
</protein>
<proteinExistence type="evidence at protein level"/>
<evidence type="ECO:0000255" key="1"/>
<evidence type="ECO:0000269" key="2">
    <source>
    </source>
</evidence>
<evidence type="ECO:0000303" key="3">
    <source>
    </source>
</evidence>
<evidence type="ECO:0000305" key="4"/>
<sequence length="11" mass="1103">GSSGLISMPRV</sequence>
<dbReference type="GO" id="GO:0005576">
    <property type="term" value="C:extracellular region"/>
    <property type="evidence" value="ECO:0007669"/>
    <property type="project" value="UniProtKB-SubCell"/>
</dbReference>
<dbReference type="GO" id="GO:0007218">
    <property type="term" value="P:neuropeptide signaling pathway"/>
    <property type="evidence" value="ECO:0007669"/>
    <property type="project" value="UniProtKB-KW"/>
</dbReference>
<dbReference type="InterPro" id="IPR013231">
    <property type="entry name" value="Periviscerokinin"/>
</dbReference>
<dbReference type="Pfam" id="PF08259">
    <property type="entry name" value="Periviscerokin"/>
    <property type="match status" value="1"/>
</dbReference>
<feature type="peptide" id="PRO_0000378804" description="Periviscerokinin-2" evidence="2">
    <location>
        <begin position="1"/>
        <end position="11"/>
    </location>
</feature>
<feature type="modified residue" description="Valine amide" evidence="2">
    <location>
        <position position="11"/>
    </location>
</feature>
<keyword id="KW-0027">Amidation</keyword>
<keyword id="KW-0903">Direct protein sequencing</keyword>
<keyword id="KW-0527">Neuropeptide</keyword>
<keyword id="KW-0964">Secreted</keyword>
<accession>P85718</accession>